<evidence type="ECO:0000255" key="1"/>
<feature type="signal peptide" evidence="1">
    <location>
        <begin position="1"/>
        <end position="19"/>
    </location>
</feature>
<feature type="chain" id="PRO_0000244049" description="Uncharacterized protein R564">
    <location>
        <begin position="20"/>
        <end position="137"/>
    </location>
</feature>
<organismHost>
    <name type="scientific">Acanthamoeba polyphaga</name>
    <name type="common">Amoeba</name>
    <dbReference type="NCBI Taxonomy" id="5757"/>
</organismHost>
<name>YR564_MIMIV</name>
<protein>
    <recommendedName>
        <fullName>Uncharacterized protein R564</fullName>
    </recommendedName>
</protein>
<sequence>MVAFYGIFLFGTVYLFGLAKLFYQYVSNKLVSTVHIVTDSSNELVESTEPTEIIEVDDVEIIQPIEFSEHIESSEPIESTEPISLSEREKIAEIRMKKFSQRSKISNIINKKRVQTQFSNTDYSDRHRDQVLRDWMN</sequence>
<organism>
    <name type="scientific">Acanthamoeba polyphaga mimivirus</name>
    <name type="common">APMV</name>
    <dbReference type="NCBI Taxonomy" id="212035"/>
    <lineage>
        <taxon>Viruses</taxon>
        <taxon>Varidnaviria</taxon>
        <taxon>Bamfordvirae</taxon>
        <taxon>Nucleocytoviricota</taxon>
        <taxon>Megaviricetes</taxon>
        <taxon>Imitervirales</taxon>
        <taxon>Mimiviridae</taxon>
        <taxon>Megamimivirinae</taxon>
        <taxon>Mimivirus</taxon>
        <taxon>Mimivirus bradfordmassiliense</taxon>
    </lineage>
</organism>
<keyword id="KW-1185">Reference proteome</keyword>
<keyword id="KW-0732">Signal</keyword>
<reference key="1">
    <citation type="journal article" date="2004" name="Science">
        <title>The 1.2-megabase genome sequence of Mimivirus.</title>
        <authorList>
            <person name="Raoult D."/>
            <person name="Audic S."/>
            <person name="Robert C."/>
            <person name="Abergel C."/>
            <person name="Renesto P."/>
            <person name="Ogata H."/>
            <person name="La Scola B."/>
            <person name="Susan M."/>
            <person name="Claverie J.-M."/>
        </authorList>
    </citation>
    <scope>NUCLEOTIDE SEQUENCE [LARGE SCALE GENOMIC DNA]</scope>
    <source>
        <strain>Rowbotham-Bradford</strain>
    </source>
</reference>
<dbReference type="EMBL" id="AY653733">
    <property type="protein sequence ID" value="AAV50827.1"/>
    <property type="molecule type" value="Genomic_DNA"/>
</dbReference>
<dbReference type="KEGG" id="vg:9925200"/>
<dbReference type="Proteomes" id="UP000001134">
    <property type="component" value="Genome"/>
</dbReference>
<accession>Q5UR42</accession>
<gene>
    <name type="ordered locus">MIMI_R564</name>
</gene>
<proteinExistence type="inferred from homology"/>